<gene>
    <name type="primary">Ren1</name>
    <name type="synonym">Ren</name>
</gene>
<comment type="function">
    <text evidence="1">Renin is a highly specific endopeptidase, whose only known function is to generate angiotensin I from angiotensinogen in the plasma, initiating a cascade of reactions that produce an elevation of blood pressure and increased sodium retention by the kidney.</text>
</comment>
<comment type="catalytic activity">
    <reaction evidence="1">
        <text>Cleavage of Leu-|-Xaa bond in angiotensinogen to generate angiotensin I.</text>
        <dbReference type="EC" id="3.4.23.15"/>
    </reaction>
</comment>
<comment type="activity regulation">
    <text evidence="1">Interaction with ATP6AP2 results in a 5-fold increased efficiency in angiotensinogen processing.</text>
</comment>
<comment type="subunit">
    <text evidence="1">Interacts with ATP6AP2.</text>
</comment>
<comment type="subcellular location">
    <subcellularLocation>
        <location evidence="1">Secreted</location>
    </subcellularLocation>
    <subcellularLocation>
        <location evidence="1">Membrane</location>
    </subcellularLocation>
    <text evidence="1">Associated to membranes via binding to ATP6AP2.</text>
</comment>
<comment type="similarity">
    <text evidence="6">Belongs to the peptidase A1 family.</text>
</comment>
<sequence>MGGRRMPLWALLLLWTSCSFSLPTDTASFGRILLKKMPSVREILEERGVDMTRISAEWGEFIKKSSFTNVTSPVVLTNYLDTQYYGEIGIGTPSQTFKVIFDTGSANLWVPSTKCGPLYTACEIHNLYDSSESSSYMENGTEFTIHYGSGKVKGFLSQDVVTVGGIIVTQTFGEVTELPLIPFMLAKFDGVLGMGFPAQAVDGVIPVFDHILSQRVLKEEVFSVYYSRESHLLGGEVVLGGSDPQHYQGNFHYVSISKAGSWQITMKGVSVGPATLLCEEGCMAVVDTGTSYISGPTSSLQLIMQALGVKEKRANNYVVNCSQVPTLPDISFYLGGRTYTLSNMDYVQKNPFRNDDLCILALQGLDIPPPTGPVWVLGATFIRKFYTEFDRHNNRIGFALAR</sequence>
<dbReference type="EC" id="3.4.23.15" evidence="1"/>
<dbReference type="EMBL" id="X07033">
    <property type="protein sequence ID" value="CAA30082.1"/>
    <property type="molecule type" value="mRNA"/>
</dbReference>
<dbReference type="EMBL" id="J02941">
    <property type="protein sequence ID" value="AAA42030.1"/>
    <property type="molecule type" value="mRNA"/>
</dbReference>
<dbReference type="EMBL" id="M37278">
    <property type="protein sequence ID" value="AAA42031.1"/>
    <property type="status" value="ALT_SEQ"/>
    <property type="molecule type" value="Genomic_DNA"/>
</dbReference>
<dbReference type="EMBL" id="S60054">
    <property type="protein sequence ID" value="AAP13916.1"/>
    <property type="molecule type" value="mRNA"/>
</dbReference>
<dbReference type="EMBL" id="BC078878">
    <property type="protein sequence ID" value="AAH78878.1"/>
    <property type="molecule type" value="mRNA"/>
</dbReference>
<dbReference type="PIR" id="A29991">
    <property type="entry name" value="RERTK"/>
</dbReference>
<dbReference type="RefSeq" id="NP_036774.4">
    <property type="nucleotide sequence ID" value="NM_012642.4"/>
</dbReference>
<dbReference type="PDB" id="5MLG">
    <property type="method" value="X-ray"/>
    <property type="resolution" value="2.60 A"/>
    <property type="chains" value="A=22-402"/>
</dbReference>
<dbReference type="PDBsum" id="5MLG"/>
<dbReference type="SMR" id="P08424"/>
<dbReference type="BioGRID" id="246843">
    <property type="interactions" value="1"/>
</dbReference>
<dbReference type="FunCoup" id="P08424">
    <property type="interactions" value="72"/>
</dbReference>
<dbReference type="STRING" id="10116.ENSRNOP00000003951"/>
<dbReference type="BindingDB" id="P08424"/>
<dbReference type="ChEMBL" id="CHEMBL2322"/>
<dbReference type="DrugCentral" id="P08424"/>
<dbReference type="MEROPS" id="A01.008"/>
<dbReference type="GlyCosmos" id="P08424">
    <property type="glycosylation" value="3 sites, No reported glycans"/>
</dbReference>
<dbReference type="GlyGen" id="P08424">
    <property type="glycosylation" value="8 sites"/>
</dbReference>
<dbReference type="PhosphoSitePlus" id="P08424"/>
<dbReference type="PaxDb" id="10116-ENSRNOP00000003951"/>
<dbReference type="DNASU" id="24715"/>
<dbReference type="Ensembl" id="ENSRNOT00000003951.5">
    <property type="protein sequence ID" value="ENSRNOP00000003951.2"/>
    <property type="gene ID" value="ENSRNOG00000002937.5"/>
</dbReference>
<dbReference type="GeneID" id="24715"/>
<dbReference type="KEGG" id="rno:24715"/>
<dbReference type="UCSC" id="RGD:3554">
    <property type="organism name" value="rat"/>
</dbReference>
<dbReference type="AGR" id="RGD:3554"/>
<dbReference type="CTD" id="5972"/>
<dbReference type="RGD" id="3554">
    <property type="gene designation" value="Ren1"/>
</dbReference>
<dbReference type="eggNOG" id="KOG1339">
    <property type="taxonomic scope" value="Eukaryota"/>
</dbReference>
<dbReference type="GeneTree" id="ENSGT00940000157898"/>
<dbReference type="HOGENOM" id="CLU_013253_3_3_1"/>
<dbReference type="InParanoid" id="P08424"/>
<dbReference type="OMA" id="DMQYYGE"/>
<dbReference type="OrthoDB" id="771136at2759"/>
<dbReference type="PhylomeDB" id="P08424"/>
<dbReference type="TreeFam" id="TF314990"/>
<dbReference type="Reactome" id="R-RNO-2022377">
    <property type="pathway name" value="Metabolism of Angiotensinogen to Angiotensins"/>
</dbReference>
<dbReference type="PRO" id="PR:P08424"/>
<dbReference type="Proteomes" id="UP000002494">
    <property type="component" value="Chromosome 13"/>
</dbReference>
<dbReference type="Bgee" id="ENSRNOG00000002937">
    <property type="expression patterns" value="Expressed in kidney and 9 other cell types or tissues"/>
</dbReference>
<dbReference type="ExpressionAtlas" id="P08424">
    <property type="expression patterns" value="baseline and differential"/>
</dbReference>
<dbReference type="GO" id="GO:0045177">
    <property type="term" value="C:apical part of cell"/>
    <property type="evidence" value="ECO:0000266"/>
    <property type="project" value="RGD"/>
</dbReference>
<dbReference type="GO" id="GO:0005576">
    <property type="term" value="C:extracellular region"/>
    <property type="evidence" value="ECO:0000266"/>
    <property type="project" value="RGD"/>
</dbReference>
<dbReference type="GO" id="GO:0005615">
    <property type="term" value="C:extracellular space"/>
    <property type="evidence" value="ECO:0000314"/>
    <property type="project" value="RGD"/>
</dbReference>
<dbReference type="GO" id="GO:0016020">
    <property type="term" value="C:membrane"/>
    <property type="evidence" value="ECO:0007669"/>
    <property type="project" value="UniProtKB-SubCell"/>
</dbReference>
<dbReference type="GO" id="GO:0004190">
    <property type="term" value="F:aspartic-type endopeptidase activity"/>
    <property type="evidence" value="ECO:0000266"/>
    <property type="project" value="RGD"/>
</dbReference>
<dbReference type="GO" id="GO:0004175">
    <property type="term" value="F:endopeptidase activity"/>
    <property type="evidence" value="ECO:0000314"/>
    <property type="project" value="RGD"/>
</dbReference>
<dbReference type="GO" id="GO:0005159">
    <property type="term" value="F:insulin-like growth factor receptor binding"/>
    <property type="evidence" value="ECO:0000314"/>
    <property type="project" value="RGD"/>
</dbReference>
<dbReference type="GO" id="GO:0008233">
    <property type="term" value="F:peptidase activity"/>
    <property type="evidence" value="ECO:0000266"/>
    <property type="project" value="RGD"/>
</dbReference>
<dbReference type="GO" id="GO:0005102">
    <property type="term" value="F:signaling receptor binding"/>
    <property type="evidence" value="ECO:0000353"/>
    <property type="project" value="RGD"/>
</dbReference>
<dbReference type="GO" id="GO:0050435">
    <property type="term" value="P:amyloid-beta metabolic process"/>
    <property type="evidence" value="ECO:0000270"/>
    <property type="project" value="RGD"/>
</dbReference>
<dbReference type="GO" id="GO:0002003">
    <property type="term" value="P:angiotensin maturation"/>
    <property type="evidence" value="ECO:0000314"/>
    <property type="project" value="RGD"/>
</dbReference>
<dbReference type="GO" id="GO:0048469">
    <property type="term" value="P:cell maturation"/>
    <property type="evidence" value="ECO:0000266"/>
    <property type="project" value="RGD"/>
</dbReference>
<dbReference type="GO" id="GO:0071466">
    <property type="term" value="P:cellular response to xenobiotic stimulus"/>
    <property type="evidence" value="ECO:0000270"/>
    <property type="project" value="RGD"/>
</dbReference>
<dbReference type="GO" id="GO:0042756">
    <property type="term" value="P:drinking behavior"/>
    <property type="evidence" value="ECO:0000266"/>
    <property type="project" value="RGD"/>
</dbReference>
<dbReference type="GO" id="GO:0009755">
    <property type="term" value="P:hormone-mediated signaling pathway"/>
    <property type="evidence" value="ECO:0000266"/>
    <property type="project" value="RGD"/>
</dbReference>
<dbReference type="GO" id="GO:0072051">
    <property type="term" value="P:juxtaglomerular apparatus development"/>
    <property type="evidence" value="ECO:0000270"/>
    <property type="project" value="RGD"/>
</dbReference>
<dbReference type="GO" id="GO:0001822">
    <property type="term" value="P:kidney development"/>
    <property type="evidence" value="ECO:0000266"/>
    <property type="project" value="RGD"/>
</dbReference>
<dbReference type="GO" id="GO:0008584">
    <property type="term" value="P:male gonad development"/>
    <property type="evidence" value="ECO:0000266"/>
    <property type="project" value="RGD"/>
</dbReference>
<dbReference type="GO" id="GO:0001823">
    <property type="term" value="P:mesonephros development"/>
    <property type="evidence" value="ECO:0000266"/>
    <property type="project" value="RGD"/>
</dbReference>
<dbReference type="GO" id="GO:0006508">
    <property type="term" value="P:proteolysis"/>
    <property type="evidence" value="ECO:0000266"/>
    <property type="project" value="RGD"/>
</dbReference>
<dbReference type="GO" id="GO:0008217">
    <property type="term" value="P:regulation of blood pressure"/>
    <property type="evidence" value="ECO:0000315"/>
    <property type="project" value="RGD"/>
</dbReference>
<dbReference type="GO" id="GO:0002016">
    <property type="term" value="P:regulation of blood volume by renin-angiotensin"/>
    <property type="evidence" value="ECO:0000266"/>
    <property type="project" value="RGD"/>
</dbReference>
<dbReference type="GO" id="GO:0043408">
    <property type="term" value="P:regulation of MAPK cascade"/>
    <property type="evidence" value="ECO:0000266"/>
    <property type="project" value="RGD"/>
</dbReference>
<dbReference type="GO" id="GO:0002018">
    <property type="term" value="P:renin-angiotensin regulation of aldosterone production"/>
    <property type="evidence" value="ECO:0000266"/>
    <property type="project" value="RGD"/>
</dbReference>
<dbReference type="GO" id="GO:0051591">
    <property type="term" value="P:response to cAMP"/>
    <property type="evidence" value="ECO:0000314"/>
    <property type="project" value="RGD"/>
</dbReference>
<dbReference type="GO" id="GO:0070305">
    <property type="term" value="P:response to cGMP"/>
    <property type="evidence" value="ECO:0000314"/>
    <property type="project" value="RGD"/>
</dbReference>
<dbReference type="GO" id="GO:0035902">
    <property type="term" value="P:response to immobilization stress"/>
    <property type="evidence" value="ECO:0000270"/>
    <property type="project" value="RGD"/>
</dbReference>
<dbReference type="GO" id="GO:0032496">
    <property type="term" value="P:response to lipopolysaccharide"/>
    <property type="evidence" value="ECO:0000270"/>
    <property type="project" value="RGD"/>
</dbReference>
<dbReference type="GO" id="GO:0009410">
    <property type="term" value="P:response to xenobiotic stimulus"/>
    <property type="evidence" value="ECO:0000314"/>
    <property type="project" value="RGD"/>
</dbReference>
<dbReference type="CDD" id="cd05487">
    <property type="entry name" value="renin_like"/>
    <property type="match status" value="1"/>
</dbReference>
<dbReference type="FunFam" id="2.40.70.10:FF:000037">
    <property type="entry name" value="Renin"/>
    <property type="match status" value="1"/>
</dbReference>
<dbReference type="FunFam" id="2.40.70.10:FF:000032">
    <property type="entry name" value="renin"/>
    <property type="match status" value="1"/>
</dbReference>
<dbReference type="Gene3D" id="2.40.70.10">
    <property type="entry name" value="Acid Proteases"/>
    <property type="match status" value="2"/>
</dbReference>
<dbReference type="InterPro" id="IPR001461">
    <property type="entry name" value="Aspartic_peptidase_A1"/>
</dbReference>
<dbReference type="InterPro" id="IPR001969">
    <property type="entry name" value="Aspartic_peptidase_AS"/>
</dbReference>
<dbReference type="InterPro" id="IPR033121">
    <property type="entry name" value="PEPTIDASE_A1"/>
</dbReference>
<dbReference type="InterPro" id="IPR021109">
    <property type="entry name" value="Peptidase_aspartic_dom_sf"/>
</dbReference>
<dbReference type="InterPro" id="IPR034135">
    <property type="entry name" value="Renin-like_dom"/>
</dbReference>
<dbReference type="PANTHER" id="PTHR47966">
    <property type="entry name" value="BETA-SITE APP-CLEAVING ENZYME, ISOFORM A-RELATED"/>
    <property type="match status" value="1"/>
</dbReference>
<dbReference type="PANTHER" id="PTHR47966:SF24">
    <property type="entry name" value="RENIN"/>
    <property type="match status" value="1"/>
</dbReference>
<dbReference type="Pfam" id="PF00026">
    <property type="entry name" value="Asp"/>
    <property type="match status" value="1"/>
</dbReference>
<dbReference type="PRINTS" id="PR00792">
    <property type="entry name" value="PEPSIN"/>
</dbReference>
<dbReference type="SUPFAM" id="SSF50630">
    <property type="entry name" value="Acid proteases"/>
    <property type="match status" value="1"/>
</dbReference>
<dbReference type="PROSITE" id="PS00141">
    <property type="entry name" value="ASP_PROTEASE"/>
    <property type="match status" value="2"/>
</dbReference>
<dbReference type="PROSITE" id="PS51767">
    <property type="entry name" value="PEPTIDASE_A1"/>
    <property type="match status" value="1"/>
</dbReference>
<accession>P08424</accession>
<accession>Q63497</accession>
<evidence type="ECO:0000250" key="1">
    <source>
        <dbReference type="UniProtKB" id="P00797"/>
    </source>
</evidence>
<evidence type="ECO:0000255" key="2"/>
<evidence type="ECO:0000255" key="3">
    <source>
        <dbReference type="PROSITE-ProRule" id="PRU01103"/>
    </source>
</evidence>
<evidence type="ECO:0000255" key="4">
    <source>
        <dbReference type="PROSITE-ProRule" id="PRU10094"/>
    </source>
</evidence>
<evidence type="ECO:0000303" key="5">
    <source>
    </source>
</evidence>
<evidence type="ECO:0000305" key="6"/>
<evidence type="ECO:0007829" key="7">
    <source>
        <dbReference type="PDB" id="5MLG"/>
    </source>
</evidence>
<keyword id="KW-0002">3D-structure</keyword>
<keyword id="KW-0064">Aspartyl protease</keyword>
<keyword id="KW-0165">Cleavage on pair of basic residues</keyword>
<keyword id="KW-1015">Disulfide bond</keyword>
<keyword id="KW-0325">Glycoprotein</keyword>
<keyword id="KW-0378">Hydrolase</keyword>
<keyword id="KW-0472">Membrane</keyword>
<keyword id="KW-0645">Protease</keyword>
<keyword id="KW-1185">Reference proteome</keyword>
<keyword id="KW-0964">Secreted</keyword>
<keyword id="KW-0732">Signal</keyword>
<keyword id="KW-0865">Zymogen</keyword>
<reference key="1">
    <citation type="journal article" date="1988" name="Nucleic Acids Res.">
        <title>Nucleotide sequence of rat renin cDNA.</title>
        <authorList>
            <person name="Tada M."/>
            <person name="Fukamizu A."/>
            <person name="Seo M.S."/>
            <person name="Takahashi S."/>
            <person name="Murakami K."/>
        </authorList>
    </citation>
    <scope>NUCLEOTIDE SEQUENCE [MRNA]</scope>
    <source>
        <strain>Sprague-Dawley</strain>
    </source>
</reference>
<reference key="2">
    <citation type="journal article" date="1987" name="Proc. Natl. Acad. Sci. U.S.A.">
        <title>Molecular cloning of rat renin cDNA and its gene.</title>
        <authorList>
            <person name="Burnham C.E."/>
            <person name="Hawelu-Johnson C.L."/>
            <person name="Frank B.M."/>
            <person name="Lynch K.R."/>
        </authorList>
    </citation>
    <scope>NUCLEOTIDE SEQUENCE [MRNA]</scope>
</reference>
<reference key="3">
    <citation type="journal article" date="1988" name="J. Mol. Biol.">
        <title>Structure of the rat renin gene.</title>
        <authorList>
            <person name="Fukamizu A."/>
            <person name="Nishi K."/>
            <person name="Cho T."/>
            <person name="Saitoh M."/>
            <person name="Nakayama K."/>
            <person name="Ohkubo H."/>
            <person name="Nakanishi S."/>
            <person name="Murakami K."/>
        </authorList>
    </citation>
    <scope>NUCLEOTIDE SEQUENCE [MRNA]</scope>
    <source>
        <strain>Sprague-Dawley</strain>
    </source>
</reference>
<reference key="4">
    <citation type="journal article" date="1993" name="Clin. Exp. Hypertens.">
        <title>Renin gene nucleotide sequence of coding and regulatory regions in Dahl rats.</title>
        <authorList>
            <person name="Alam K.Y."/>
            <person name="Wang Y."/>
            <person name="Dene H."/>
            <person name="Rapp J.P."/>
        </authorList>
    </citation>
    <scope>NUCLEOTIDE SEQUENCE [GENOMIC DNA]</scope>
</reference>
<reference key="5">
    <citation type="journal article" date="2004" name="Genome Res.">
        <title>The status, quality, and expansion of the NIH full-length cDNA project: the Mammalian Gene Collection (MGC).</title>
        <authorList>
            <consortium name="The MGC Project Team"/>
        </authorList>
    </citation>
    <scope>NUCLEOTIDE SEQUENCE [LARGE SCALE MRNA]</scope>
    <source>
        <tissue>Kidney</tissue>
    </source>
</reference>
<proteinExistence type="evidence at protein level"/>
<name>RENI_RAT</name>
<protein>
    <recommendedName>
        <fullName evidence="5">Renin</fullName>
        <ecNumber evidence="1">3.4.23.15</ecNumber>
    </recommendedName>
    <alternativeName>
        <fullName>Angiotensinogenase</fullName>
    </alternativeName>
</protein>
<organism>
    <name type="scientific">Rattus norvegicus</name>
    <name type="common">Rat</name>
    <dbReference type="NCBI Taxonomy" id="10116"/>
    <lineage>
        <taxon>Eukaryota</taxon>
        <taxon>Metazoa</taxon>
        <taxon>Chordata</taxon>
        <taxon>Craniata</taxon>
        <taxon>Vertebrata</taxon>
        <taxon>Euteleostomi</taxon>
        <taxon>Mammalia</taxon>
        <taxon>Eutheria</taxon>
        <taxon>Euarchontoglires</taxon>
        <taxon>Glires</taxon>
        <taxon>Rodentia</taxon>
        <taxon>Myomorpha</taxon>
        <taxon>Muroidea</taxon>
        <taxon>Muridae</taxon>
        <taxon>Murinae</taxon>
        <taxon>Rattus</taxon>
    </lineage>
</organism>
<feature type="signal peptide" evidence="6">
    <location>
        <begin position="1"/>
        <end position="26"/>
    </location>
</feature>
<feature type="propeptide" id="PRO_0000026091" description="Activation peptide">
    <location>
        <begin position="27"/>
        <end position="64"/>
    </location>
</feature>
<feature type="chain" id="PRO_0000026092" description="Renin">
    <location>
        <begin position="65"/>
        <end position="402"/>
    </location>
</feature>
<feature type="domain" description="Peptidase A1" evidence="3">
    <location>
        <begin position="84"/>
        <end position="399"/>
    </location>
</feature>
<feature type="active site" evidence="4">
    <location>
        <position position="102"/>
    </location>
</feature>
<feature type="active site" evidence="4">
    <location>
        <position position="287"/>
    </location>
</feature>
<feature type="glycosylation site" description="N-linked (GlcNAc...) asparagine" evidence="2">
    <location>
        <position position="69"/>
    </location>
</feature>
<feature type="glycosylation site" description="N-linked (GlcNAc...) asparagine" evidence="2">
    <location>
        <position position="139"/>
    </location>
</feature>
<feature type="glycosylation site" description="N-linked (GlcNAc...) asparagine" evidence="2">
    <location>
        <position position="320"/>
    </location>
</feature>
<feature type="disulfide bond" evidence="1">
    <location>
        <begin position="115"/>
        <end position="122"/>
    </location>
</feature>
<feature type="disulfide bond" evidence="1">
    <location>
        <begin position="278"/>
        <end position="282"/>
    </location>
</feature>
<feature type="disulfide bond" evidence="1">
    <location>
        <begin position="321"/>
        <end position="358"/>
    </location>
</feature>
<feature type="sequence conflict" description="In Ref. 1; CAA30082." evidence="6" ref="1">
    <original>A</original>
    <variation>V</variation>
    <location>
        <position position="200"/>
    </location>
</feature>
<feature type="sequence conflict" description="In Ref. 2; AAA42030." evidence="6" ref="2">
    <original>QR</original>
    <variation>HE</variation>
    <location>
        <begin position="214"/>
        <end position="215"/>
    </location>
</feature>
<feature type="sequence conflict" description="In Ref. 1; CAA30082." evidence="6" ref="1">
    <original>V</original>
    <variation>L</variation>
    <location>
        <position position="271"/>
    </location>
</feature>
<feature type="strand" evidence="7">
    <location>
        <begin position="30"/>
        <end position="36"/>
    </location>
</feature>
<feature type="helix" evidence="7">
    <location>
        <begin position="40"/>
        <end position="46"/>
    </location>
</feature>
<feature type="helix" evidence="7">
    <location>
        <begin position="51"/>
        <end position="58"/>
    </location>
</feature>
<feature type="strand" evidence="7">
    <location>
        <begin position="79"/>
        <end position="81"/>
    </location>
</feature>
<feature type="strand" evidence="7">
    <location>
        <begin position="84"/>
        <end position="90"/>
    </location>
</feature>
<feature type="turn" evidence="7">
    <location>
        <begin position="91"/>
        <end position="94"/>
    </location>
</feature>
<feature type="strand" evidence="7">
    <location>
        <begin position="95"/>
        <end position="102"/>
    </location>
</feature>
<feature type="strand" evidence="7">
    <location>
        <begin position="108"/>
        <end position="112"/>
    </location>
</feature>
<feature type="helix" evidence="7">
    <location>
        <begin position="120"/>
        <end position="124"/>
    </location>
</feature>
<feature type="helix" evidence="7">
    <location>
        <begin position="130"/>
        <end position="132"/>
    </location>
</feature>
<feature type="strand" evidence="7">
    <location>
        <begin position="137"/>
        <end position="146"/>
    </location>
</feature>
<feature type="strand" evidence="7">
    <location>
        <begin position="151"/>
        <end position="163"/>
    </location>
</feature>
<feature type="strand" evidence="7">
    <location>
        <begin position="166"/>
        <end position="177"/>
    </location>
</feature>
<feature type="helix" evidence="7">
    <location>
        <begin position="180"/>
        <end position="183"/>
    </location>
</feature>
<feature type="strand" evidence="7">
    <location>
        <begin position="190"/>
        <end position="193"/>
    </location>
</feature>
<feature type="helix" evidence="7">
    <location>
        <begin position="197"/>
        <end position="199"/>
    </location>
</feature>
<feature type="helix" evidence="7">
    <location>
        <begin position="201"/>
        <end position="203"/>
    </location>
</feature>
<feature type="helix" evidence="7">
    <location>
        <begin position="207"/>
        <end position="213"/>
    </location>
</feature>
<feature type="strand" evidence="7">
    <location>
        <begin position="217"/>
        <end position="226"/>
    </location>
</feature>
<feature type="strand" evidence="7">
    <location>
        <begin position="235"/>
        <end position="241"/>
    </location>
</feature>
<feature type="helix" evidence="7">
    <location>
        <begin position="244"/>
        <end position="246"/>
    </location>
</feature>
<feature type="strand" evidence="7">
    <location>
        <begin position="247"/>
        <end position="255"/>
    </location>
</feature>
<feature type="strand" evidence="7">
    <location>
        <begin position="261"/>
        <end position="271"/>
    </location>
</feature>
<feature type="strand" evidence="7">
    <location>
        <begin position="274"/>
        <end position="277"/>
    </location>
</feature>
<feature type="strand" evidence="7">
    <location>
        <begin position="282"/>
        <end position="286"/>
    </location>
</feature>
<feature type="strand" evidence="7">
    <location>
        <begin position="292"/>
        <end position="295"/>
    </location>
</feature>
<feature type="helix" evidence="7">
    <location>
        <begin position="297"/>
        <end position="307"/>
    </location>
</feature>
<feature type="strand" evidence="7">
    <location>
        <begin position="316"/>
        <end position="318"/>
    </location>
</feature>
<feature type="helix" evidence="7">
    <location>
        <begin position="321"/>
        <end position="323"/>
    </location>
</feature>
<feature type="strand" evidence="7">
    <location>
        <begin position="330"/>
        <end position="334"/>
    </location>
</feature>
<feature type="strand" evidence="7">
    <location>
        <begin position="337"/>
        <end position="341"/>
    </location>
</feature>
<feature type="turn" evidence="7">
    <location>
        <begin position="343"/>
        <end position="345"/>
    </location>
</feature>
<feature type="strand" evidence="7">
    <location>
        <begin position="346"/>
        <end position="348"/>
    </location>
</feature>
<feature type="strand" evidence="7">
    <location>
        <begin position="359"/>
        <end position="364"/>
    </location>
</feature>
<feature type="turn" evidence="7">
    <location>
        <begin position="369"/>
        <end position="371"/>
    </location>
</feature>
<feature type="strand" evidence="7">
    <location>
        <begin position="373"/>
        <end position="377"/>
    </location>
</feature>
<feature type="helix" evidence="7">
    <location>
        <begin position="379"/>
        <end position="384"/>
    </location>
</feature>
<feature type="strand" evidence="7">
    <location>
        <begin position="385"/>
        <end position="390"/>
    </location>
</feature>
<feature type="turn" evidence="7">
    <location>
        <begin position="391"/>
        <end position="394"/>
    </location>
</feature>
<feature type="strand" evidence="7">
    <location>
        <begin position="395"/>
        <end position="401"/>
    </location>
</feature>